<comment type="subcellular location">
    <subcellularLocation>
        <location evidence="1">Secreted</location>
    </subcellularLocation>
</comment>
<comment type="tissue specificity">
    <text>Expressed by the venom duct.</text>
</comment>
<comment type="domain">
    <text evidence="1">The presence of a 'disulfide through disulfide knot' structurally defines this protein as a knottin.</text>
</comment>
<comment type="domain">
    <text>The cysteine framework is VI/VII (C-C-CC-C-C).</text>
</comment>
<comment type="similarity">
    <text evidence="3">Belongs to the conotoxin O1 superfamily.</text>
</comment>
<protein>
    <recommendedName>
        <fullName>Conotoxin ArMKLT2-0112</fullName>
    </recommendedName>
</protein>
<proteinExistence type="evidence at transcript level"/>
<reference key="1">
    <citation type="journal article" date="2001" name="Mol. Biol. Evol.">
        <title>Mechanisms for evolving hypervariability: the case of conopeptides.</title>
        <authorList>
            <person name="Conticello S.G."/>
            <person name="Gilad Y."/>
            <person name="Avidan N."/>
            <person name="Ben-Asher E."/>
            <person name="Levy Z."/>
            <person name="Fainzilber M."/>
        </authorList>
    </citation>
    <scope>NUCLEOTIDE SEQUENCE [MRNA]</scope>
    <source>
        <tissue>Venom duct</tissue>
    </source>
</reference>
<dbReference type="EMBL" id="AF215058">
    <property type="protein sequence ID" value="AAG60486.1"/>
    <property type="molecule type" value="mRNA"/>
</dbReference>
<dbReference type="SMR" id="Q9BP80"/>
<dbReference type="ConoServer" id="745">
    <property type="toxin name" value="Ar6.16 precursor"/>
</dbReference>
<dbReference type="GO" id="GO:0005576">
    <property type="term" value="C:extracellular region"/>
    <property type="evidence" value="ECO:0007669"/>
    <property type="project" value="UniProtKB-SubCell"/>
</dbReference>
<dbReference type="GO" id="GO:0008200">
    <property type="term" value="F:ion channel inhibitor activity"/>
    <property type="evidence" value="ECO:0007669"/>
    <property type="project" value="InterPro"/>
</dbReference>
<dbReference type="GO" id="GO:0090729">
    <property type="term" value="F:toxin activity"/>
    <property type="evidence" value="ECO:0007669"/>
    <property type="project" value="UniProtKB-KW"/>
</dbReference>
<dbReference type="InterPro" id="IPR004214">
    <property type="entry name" value="Conotoxin"/>
</dbReference>
<dbReference type="Pfam" id="PF02950">
    <property type="entry name" value="Conotoxin"/>
    <property type="match status" value="1"/>
</dbReference>
<feature type="signal peptide" evidence="2">
    <location>
        <begin position="1"/>
        <end position="22"/>
    </location>
</feature>
<feature type="propeptide" id="PRO_0000404748" evidence="1">
    <location>
        <begin position="23"/>
        <end position="40"/>
    </location>
</feature>
<feature type="peptide" id="PRO_0000404749" description="Conotoxin ArMKLT2-0112">
    <location>
        <begin position="41"/>
        <end position="70"/>
    </location>
</feature>
<feature type="modified residue" description="Pyrrolidone carboxylic acid" evidence="1">
    <location>
        <position position="41"/>
    </location>
</feature>
<feature type="disulfide bond" evidence="1">
    <location>
        <begin position="42"/>
        <end position="56"/>
    </location>
</feature>
<feature type="disulfide bond" evidence="1">
    <location>
        <begin position="49"/>
        <end position="60"/>
    </location>
</feature>
<feature type="disulfide bond" evidence="1">
    <location>
        <begin position="55"/>
        <end position="67"/>
    </location>
</feature>
<accession>Q9BP80</accession>
<name>O1616_CONAE</name>
<evidence type="ECO:0000250" key="1"/>
<evidence type="ECO:0000255" key="2"/>
<evidence type="ECO:0000305" key="3"/>
<organism>
    <name type="scientific">Conus arenatus</name>
    <name type="common">Sand-dusted cone</name>
    <dbReference type="NCBI Taxonomy" id="89451"/>
    <lineage>
        <taxon>Eukaryota</taxon>
        <taxon>Metazoa</taxon>
        <taxon>Spiralia</taxon>
        <taxon>Lophotrochozoa</taxon>
        <taxon>Mollusca</taxon>
        <taxon>Gastropoda</taxon>
        <taxon>Caenogastropoda</taxon>
        <taxon>Neogastropoda</taxon>
        <taxon>Conoidea</taxon>
        <taxon>Conidae</taxon>
        <taxon>Conus</taxon>
    </lineage>
</organism>
<sequence length="70" mass="7765">MKLTCVLIIAVLFLTACQLTTGEQKDHALRSTDKNSKLTRQCTPVGGYCSRHYHCCSNHCIKSIGRCVAH</sequence>
<keyword id="KW-1015">Disulfide bond</keyword>
<keyword id="KW-0960">Knottin</keyword>
<keyword id="KW-0528">Neurotoxin</keyword>
<keyword id="KW-0873">Pyrrolidone carboxylic acid</keyword>
<keyword id="KW-0964">Secreted</keyword>
<keyword id="KW-0732">Signal</keyword>
<keyword id="KW-0800">Toxin</keyword>